<organism>
    <name type="scientific">Mycobacterium marinum (strain ATCC BAA-535 / M)</name>
    <dbReference type="NCBI Taxonomy" id="216594"/>
    <lineage>
        <taxon>Bacteria</taxon>
        <taxon>Bacillati</taxon>
        <taxon>Actinomycetota</taxon>
        <taxon>Actinomycetes</taxon>
        <taxon>Mycobacteriales</taxon>
        <taxon>Mycobacteriaceae</taxon>
        <taxon>Mycobacterium</taxon>
        <taxon>Mycobacterium ulcerans group</taxon>
    </lineage>
</organism>
<keyword id="KW-1185">Reference proteome</keyword>
<keyword id="KW-0687">Ribonucleoprotein</keyword>
<keyword id="KW-0689">Ribosomal protein</keyword>
<keyword id="KW-0694">RNA-binding</keyword>
<keyword id="KW-0699">rRNA-binding</keyword>
<accession>B2HKQ2</accession>
<feature type="chain" id="PRO_1000128455" description="Small ribosomal subunit protein uS14A">
    <location>
        <begin position="1"/>
        <end position="101"/>
    </location>
</feature>
<feature type="region of interest" description="Disordered" evidence="2">
    <location>
        <begin position="35"/>
        <end position="56"/>
    </location>
</feature>
<reference key="1">
    <citation type="journal article" date="2008" name="Genome Res.">
        <title>Insights from the complete genome sequence of Mycobacterium marinum on the evolution of Mycobacterium tuberculosis.</title>
        <authorList>
            <person name="Stinear T.P."/>
            <person name="Seemann T."/>
            <person name="Harrison P.F."/>
            <person name="Jenkin G.A."/>
            <person name="Davies J.K."/>
            <person name="Johnson P.D."/>
            <person name="Abdellah Z."/>
            <person name="Arrowsmith C."/>
            <person name="Chillingworth T."/>
            <person name="Churcher C."/>
            <person name="Clarke K."/>
            <person name="Cronin A."/>
            <person name="Davis P."/>
            <person name="Goodhead I."/>
            <person name="Holroyd N."/>
            <person name="Jagels K."/>
            <person name="Lord A."/>
            <person name="Moule S."/>
            <person name="Mungall K."/>
            <person name="Norbertczak H."/>
            <person name="Quail M.A."/>
            <person name="Rabbinowitsch E."/>
            <person name="Walker D."/>
            <person name="White B."/>
            <person name="Whitehead S."/>
            <person name="Small P.L."/>
            <person name="Brosch R."/>
            <person name="Ramakrishnan L."/>
            <person name="Fischbach M.A."/>
            <person name="Parkhill J."/>
            <person name="Cole S.T."/>
        </authorList>
    </citation>
    <scope>NUCLEOTIDE SEQUENCE [LARGE SCALE GENOMIC DNA]</scope>
    <source>
        <strain>ATCC BAA-535 / M</strain>
    </source>
</reference>
<evidence type="ECO:0000255" key="1">
    <source>
        <dbReference type="HAMAP-Rule" id="MF_00537"/>
    </source>
</evidence>
<evidence type="ECO:0000256" key="2">
    <source>
        <dbReference type="SAM" id="MobiDB-lite"/>
    </source>
</evidence>
<evidence type="ECO:0000305" key="3"/>
<sequence length="101" mass="11668">MAKKSKIVKNNKRRDIVARYAQRRAELKQIIQSPTSSYEQRLDAQRALSRQPRDASAVRLRNRDAIDGRPRGHLRKFGLSRVRVRELAHAGQLPGVRKASW</sequence>
<gene>
    <name evidence="1" type="primary">rpsN</name>
    <name type="ordered locus">MMAR_0290</name>
</gene>
<name>RS14_MYCMM</name>
<proteinExistence type="inferred from homology"/>
<protein>
    <recommendedName>
        <fullName evidence="1">Small ribosomal subunit protein uS14A</fullName>
    </recommendedName>
    <alternativeName>
        <fullName evidence="3">30S ribosomal protein S14</fullName>
    </alternativeName>
</protein>
<dbReference type="EMBL" id="CP000854">
    <property type="protein sequence ID" value="ACC38757.1"/>
    <property type="molecule type" value="Genomic_DNA"/>
</dbReference>
<dbReference type="RefSeq" id="WP_011742331.1">
    <property type="nucleotide sequence ID" value="NC_010612.1"/>
</dbReference>
<dbReference type="SMR" id="B2HKQ2"/>
<dbReference type="STRING" id="216594.MMAR_0290"/>
<dbReference type="GeneID" id="93439327"/>
<dbReference type="KEGG" id="mmi:MMAR_0290"/>
<dbReference type="eggNOG" id="COG0199">
    <property type="taxonomic scope" value="Bacteria"/>
</dbReference>
<dbReference type="HOGENOM" id="CLU_139869_0_1_11"/>
<dbReference type="OrthoDB" id="9810484at2"/>
<dbReference type="Proteomes" id="UP000001190">
    <property type="component" value="Chromosome"/>
</dbReference>
<dbReference type="GO" id="GO:0015935">
    <property type="term" value="C:small ribosomal subunit"/>
    <property type="evidence" value="ECO:0007669"/>
    <property type="project" value="TreeGrafter"/>
</dbReference>
<dbReference type="GO" id="GO:0019843">
    <property type="term" value="F:rRNA binding"/>
    <property type="evidence" value="ECO:0007669"/>
    <property type="project" value="UniProtKB-UniRule"/>
</dbReference>
<dbReference type="GO" id="GO:0003735">
    <property type="term" value="F:structural constituent of ribosome"/>
    <property type="evidence" value="ECO:0007669"/>
    <property type="project" value="InterPro"/>
</dbReference>
<dbReference type="GO" id="GO:0006412">
    <property type="term" value="P:translation"/>
    <property type="evidence" value="ECO:0007669"/>
    <property type="project" value="UniProtKB-UniRule"/>
</dbReference>
<dbReference type="FunFam" id="1.10.287.1480:FF:000001">
    <property type="entry name" value="30S ribosomal protein S14"/>
    <property type="match status" value="1"/>
</dbReference>
<dbReference type="Gene3D" id="1.10.287.1480">
    <property type="match status" value="1"/>
</dbReference>
<dbReference type="HAMAP" id="MF_00537">
    <property type="entry name" value="Ribosomal_uS14_1"/>
    <property type="match status" value="1"/>
</dbReference>
<dbReference type="InterPro" id="IPR001209">
    <property type="entry name" value="Ribosomal_uS14"/>
</dbReference>
<dbReference type="InterPro" id="IPR023036">
    <property type="entry name" value="Ribosomal_uS14_bac/plastid"/>
</dbReference>
<dbReference type="NCBIfam" id="NF006477">
    <property type="entry name" value="PRK08881.1"/>
    <property type="match status" value="1"/>
</dbReference>
<dbReference type="PANTHER" id="PTHR19836">
    <property type="entry name" value="30S RIBOSOMAL PROTEIN S14"/>
    <property type="match status" value="1"/>
</dbReference>
<dbReference type="PANTHER" id="PTHR19836:SF23">
    <property type="entry name" value="SMALL RIBOSOMAL SUBUNIT PROTEIN US14A"/>
    <property type="match status" value="1"/>
</dbReference>
<dbReference type="Pfam" id="PF00253">
    <property type="entry name" value="Ribosomal_S14"/>
    <property type="match status" value="1"/>
</dbReference>
<dbReference type="SUPFAM" id="SSF57716">
    <property type="entry name" value="Glucocorticoid receptor-like (DNA-binding domain)"/>
    <property type="match status" value="1"/>
</dbReference>
<comment type="function">
    <text evidence="1">Binds 16S rRNA, required for the assembly of 30S particles and may also be responsible for determining the conformation of the 16S rRNA at the A site.</text>
</comment>
<comment type="subunit">
    <text evidence="1">Part of the 30S ribosomal subunit. Contacts proteins S3 and S10.</text>
</comment>
<comment type="similarity">
    <text evidence="1">Belongs to the universal ribosomal protein uS14 family.</text>
</comment>